<accession>B0RN07</accession>
<feature type="chain" id="PRO_1000115305" description="RNA pyrophosphohydrolase">
    <location>
        <begin position="1"/>
        <end position="205"/>
    </location>
</feature>
<feature type="domain" description="Nudix hydrolase" evidence="1">
    <location>
        <begin position="6"/>
        <end position="149"/>
    </location>
</feature>
<feature type="region of interest" description="Disordered" evidence="2">
    <location>
        <begin position="178"/>
        <end position="205"/>
    </location>
</feature>
<feature type="short sequence motif" description="Nudix box">
    <location>
        <begin position="38"/>
        <end position="59"/>
    </location>
</feature>
<feature type="compositionally biased region" description="Basic residues" evidence="2">
    <location>
        <begin position="186"/>
        <end position="195"/>
    </location>
</feature>
<evidence type="ECO:0000255" key="1">
    <source>
        <dbReference type="HAMAP-Rule" id="MF_00298"/>
    </source>
</evidence>
<evidence type="ECO:0000256" key="2">
    <source>
        <dbReference type="SAM" id="MobiDB-lite"/>
    </source>
</evidence>
<protein>
    <recommendedName>
        <fullName evidence="1">RNA pyrophosphohydrolase</fullName>
        <ecNumber evidence="1">3.6.1.-</ecNumber>
    </recommendedName>
    <alternativeName>
        <fullName evidence="1">(Di)nucleoside polyphosphate hydrolase</fullName>
    </alternativeName>
</protein>
<gene>
    <name evidence="1" type="primary">rppH</name>
    <name evidence="1" type="synonym">nudH</name>
    <name type="ordered locus">xcc-b100_0508</name>
</gene>
<organism>
    <name type="scientific">Xanthomonas campestris pv. campestris (strain B100)</name>
    <dbReference type="NCBI Taxonomy" id="509169"/>
    <lineage>
        <taxon>Bacteria</taxon>
        <taxon>Pseudomonadati</taxon>
        <taxon>Pseudomonadota</taxon>
        <taxon>Gammaproteobacteria</taxon>
        <taxon>Lysobacterales</taxon>
        <taxon>Lysobacteraceae</taxon>
        <taxon>Xanthomonas</taxon>
    </lineage>
</organism>
<reference key="1">
    <citation type="journal article" date="2008" name="J. Biotechnol.">
        <title>The genome of Xanthomonas campestris pv. campestris B100 and its use for the reconstruction of metabolic pathways involved in xanthan biosynthesis.</title>
        <authorList>
            <person name="Vorhoelter F.-J."/>
            <person name="Schneiker S."/>
            <person name="Goesmann A."/>
            <person name="Krause L."/>
            <person name="Bekel T."/>
            <person name="Kaiser O."/>
            <person name="Linke B."/>
            <person name="Patschkowski T."/>
            <person name="Rueckert C."/>
            <person name="Schmid J."/>
            <person name="Sidhu V.K."/>
            <person name="Sieber V."/>
            <person name="Tauch A."/>
            <person name="Watt S.A."/>
            <person name="Weisshaar B."/>
            <person name="Becker A."/>
            <person name="Niehaus K."/>
            <person name="Puehler A."/>
        </authorList>
    </citation>
    <scope>NUCLEOTIDE SEQUENCE [LARGE SCALE GENOMIC DNA]</scope>
    <source>
        <strain>B100</strain>
    </source>
</reference>
<sequence length="205" mass="23693">MIDPDGFRPNVGIVLMREDGQVFWARRVRRDGWQFPQGGMNTDETPVEAMYRELREETGLLPEHVELLGATPGWLRYRLPSRAVRRNERQVCIGQKQVWFLLQFTGQESHLKLDHTDSPEFDHWRWVDFWYPVEHVVMFKRGVYARALRHLAPLAQTVAGPAAVGVMPQRALEAWLPGSSAAGHDRPRKRPRKRGGVLPVRINND</sequence>
<keyword id="KW-0378">Hydrolase</keyword>
<name>RPPH_XANCB</name>
<dbReference type="EC" id="3.6.1.-" evidence="1"/>
<dbReference type="EMBL" id="AM920689">
    <property type="protein sequence ID" value="CAP49842.1"/>
    <property type="molecule type" value="Genomic_DNA"/>
</dbReference>
<dbReference type="SMR" id="B0RN07"/>
<dbReference type="KEGG" id="xca:xcc-b100_0508"/>
<dbReference type="HOGENOM" id="CLU_087195_3_1_6"/>
<dbReference type="Proteomes" id="UP000001188">
    <property type="component" value="Chromosome"/>
</dbReference>
<dbReference type="GO" id="GO:0016462">
    <property type="term" value="F:pyrophosphatase activity"/>
    <property type="evidence" value="ECO:0007669"/>
    <property type="project" value="UniProtKB-ARBA"/>
</dbReference>
<dbReference type="CDD" id="cd03671">
    <property type="entry name" value="NUDIX_Ap4A_hydrolase_plant_like"/>
    <property type="match status" value="1"/>
</dbReference>
<dbReference type="FunFam" id="3.90.79.10:FF:000001">
    <property type="entry name" value="RNA pyrophosphohydrolase"/>
    <property type="match status" value="1"/>
</dbReference>
<dbReference type="Gene3D" id="3.90.79.10">
    <property type="entry name" value="Nucleoside Triphosphate Pyrophosphohydrolase"/>
    <property type="match status" value="1"/>
</dbReference>
<dbReference type="HAMAP" id="MF_00298">
    <property type="entry name" value="Nudix_RppH"/>
    <property type="match status" value="1"/>
</dbReference>
<dbReference type="InterPro" id="IPR015797">
    <property type="entry name" value="NUDIX_hydrolase-like_dom_sf"/>
</dbReference>
<dbReference type="InterPro" id="IPR020084">
    <property type="entry name" value="NUDIX_hydrolase_CS"/>
</dbReference>
<dbReference type="InterPro" id="IPR000086">
    <property type="entry name" value="NUDIX_hydrolase_dom"/>
</dbReference>
<dbReference type="InterPro" id="IPR022927">
    <property type="entry name" value="RppH"/>
</dbReference>
<dbReference type="NCBIfam" id="NF001937">
    <property type="entry name" value="PRK00714.1-4"/>
    <property type="match status" value="1"/>
</dbReference>
<dbReference type="NCBIfam" id="NF001938">
    <property type="entry name" value="PRK00714.1-5"/>
    <property type="match status" value="1"/>
</dbReference>
<dbReference type="PANTHER" id="PTHR43736">
    <property type="entry name" value="ADP-RIBOSE PYROPHOSPHATASE"/>
    <property type="match status" value="1"/>
</dbReference>
<dbReference type="PANTHER" id="PTHR43736:SF1">
    <property type="entry name" value="DIHYDRONEOPTERIN TRIPHOSPHATE DIPHOSPHATASE"/>
    <property type="match status" value="1"/>
</dbReference>
<dbReference type="Pfam" id="PF00293">
    <property type="entry name" value="NUDIX"/>
    <property type="match status" value="1"/>
</dbReference>
<dbReference type="SUPFAM" id="SSF55811">
    <property type="entry name" value="Nudix"/>
    <property type="match status" value="1"/>
</dbReference>
<dbReference type="PROSITE" id="PS51462">
    <property type="entry name" value="NUDIX"/>
    <property type="match status" value="1"/>
</dbReference>
<dbReference type="PROSITE" id="PS00893">
    <property type="entry name" value="NUDIX_BOX"/>
    <property type="match status" value="1"/>
</dbReference>
<comment type="function">
    <text evidence="1">Accelerates the degradation of transcripts by removing pyrophosphate from the 5'-end of triphosphorylated RNA, leading to a more labile monophosphorylated state that can stimulate subsequent ribonuclease cleavage.</text>
</comment>
<comment type="cofactor">
    <cofactor evidence="1">
        <name>a divalent metal cation</name>
        <dbReference type="ChEBI" id="CHEBI:60240"/>
    </cofactor>
</comment>
<comment type="similarity">
    <text evidence="1">Belongs to the Nudix hydrolase family. RppH subfamily.</text>
</comment>
<proteinExistence type="inferred from homology"/>